<protein>
    <recommendedName>
        <fullName evidence="1">Small ribosomal subunit protein uS7</fullName>
    </recommendedName>
    <alternativeName>
        <fullName evidence="2">30S ribosomal protein S7</fullName>
    </alternativeName>
</protein>
<feature type="chain" id="PRO_1000206420" description="Small ribosomal subunit protein uS7">
    <location>
        <begin position="1"/>
        <end position="157"/>
    </location>
</feature>
<keyword id="KW-0687">Ribonucleoprotein</keyword>
<keyword id="KW-0689">Ribosomal protein</keyword>
<keyword id="KW-0694">RNA-binding</keyword>
<keyword id="KW-0699">rRNA-binding</keyword>
<keyword id="KW-0820">tRNA-binding</keyword>
<reference key="1">
    <citation type="journal article" date="2011" name="J. Bacteriol.">
        <title>Complete genome sequence of the metabolically versatile plant growth-promoting endophyte, Variovorax paradoxus S110.</title>
        <authorList>
            <person name="Han J.I."/>
            <person name="Choi H.K."/>
            <person name="Lee S.W."/>
            <person name="Orwin P.M."/>
            <person name="Kim J."/>
            <person name="Laroe S.L."/>
            <person name="Kim T.G."/>
            <person name="O'Neil J."/>
            <person name="Leadbetter J.R."/>
            <person name="Lee S.Y."/>
            <person name="Hur C.G."/>
            <person name="Spain J.C."/>
            <person name="Ovchinnikova G."/>
            <person name="Goodwin L."/>
            <person name="Han C."/>
        </authorList>
    </citation>
    <scope>NUCLEOTIDE SEQUENCE [LARGE SCALE GENOMIC DNA]</scope>
    <source>
        <strain>S110</strain>
    </source>
</reference>
<gene>
    <name evidence="1" type="primary">rpsG</name>
    <name type="ordered locus">Vapar_4919</name>
</gene>
<evidence type="ECO:0000255" key="1">
    <source>
        <dbReference type="HAMAP-Rule" id="MF_00480"/>
    </source>
</evidence>
<evidence type="ECO:0000305" key="2"/>
<dbReference type="EMBL" id="CP001635">
    <property type="protein sequence ID" value="ACS21523.1"/>
    <property type="molecule type" value="Genomic_DNA"/>
</dbReference>
<dbReference type="SMR" id="C5CP59"/>
<dbReference type="STRING" id="543728.Vapar_4919"/>
<dbReference type="KEGG" id="vap:Vapar_4919"/>
<dbReference type="eggNOG" id="COG0049">
    <property type="taxonomic scope" value="Bacteria"/>
</dbReference>
<dbReference type="HOGENOM" id="CLU_072226_1_1_4"/>
<dbReference type="OrthoDB" id="9807653at2"/>
<dbReference type="GO" id="GO:0015935">
    <property type="term" value="C:small ribosomal subunit"/>
    <property type="evidence" value="ECO:0007669"/>
    <property type="project" value="InterPro"/>
</dbReference>
<dbReference type="GO" id="GO:0019843">
    <property type="term" value="F:rRNA binding"/>
    <property type="evidence" value="ECO:0007669"/>
    <property type="project" value="UniProtKB-UniRule"/>
</dbReference>
<dbReference type="GO" id="GO:0003735">
    <property type="term" value="F:structural constituent of ribosome"/>
    <property type="evidence" value="ECO:0007669"/>
    <property type="project" value="InterPro"/>
</dbReference>
<dbReference type="GO" id="GO:0000049">
    <property type="term" value="F:tRNA binding"/>
    <property type="evidence" value="ECO:0007669"/>
    <property type="project" value="UniProtKB-UniRule"/>
</dbReference>
<dbReference type="GO" id="GO:0006412">
    <property type="term" value="P:translation"/>
    <property type="evidence" value="ECO:0007669"/>
    <property type="project" value="UniProtKB-UniRule"/>
</dbReference>
<dbReference type="CDD" id="cd14869">
    <property type="entry name" value="uS7_Bacteria"/>
    <property type="match status" value="1"/>
</dbReference>
<dbReference type="FunFam" id="1.10.455.10:FF:000001">
    <property type="entry name" value="30S ribosomal protein S7"/>
    <property type="match status" value="1"/>
</dbReference>
<dbReference type="Gene3D" id="1.10.455.10">
    <property type="entry name" value="Ribosomal protein S7 domain"/>
    <property type="match status" value="1"/>
</dbReference>
<dbReference type="HAMAP" id="MF_00480_B">
    <property type="entry name" value="Ribosomal_uS7_B"/>
    <property type="match status" value="1"/>
</dbReference>
<dbReference type="InterPro" id="IPR000235">
    <property type="entry name" value="Ribosomal_uS7"/>
</dbReference>
<dbReference type="InterPro" id="IPR005717">
    <property type="entry name" value="Ribosomal_uS7_bac/org-type"/>
</dbReference>
<dbReference type="InterPro" id="IPR020606">
    <property type="entry name" value="Ribosomal_uS7_CS"/>
</dbReference>
<dbReference type="InterPro" id="IPR023798">
    <property type="entry name" value="Ribosomal_uS7_dom"/>
</dbReference>
<dbReference type="InterPro" id="IPR036823">
    <property type="entry name" value="Ribosomal_uS7_dom_sf"/>
</dbReference>
<dbReference type="NCBIfam" id="TIGR01029">
    <property type="entry name" value="rpsG_bact"/>
    <property type="match status" value="1"/>
</dbReference>
<dbReference type="PANTHER" id="PTHR11205">
    <property type="entry name" value="RIBOSOMAL PROTEIN S7"/>
    <property type="match status" value="1"/>
</dbReference>
<dbReference type="Pfam" id="PF00177">
    <property type="entry name" value="Ribosomal_S7"/>
    <property type="match status" value="1"/>
</dbReference>
<dbReference type="PIRSF" id="PIRSF002122">
    <property type="entry name" value="RPS7p_RPS7a_RPS5e_RPS7o"/>
    <property type="match status" value="1"/>
</dbReference>
<dbReference type="SUPFAM" id="SSF47973">
    <property type="entry name" value="Ribosomal protein S7"/>
    <property type="match status" value="1"/>
</dbReference>
<dbReference type="PROSITE" id="PS00052">
    <property type="entry name" value="RIBOSOMAL_S7"/>
    <property type="match status" value="1"/>
</dbReference>
<accession>C5CP59</accession>
<name>RS7_VARPS</name>
<sequence>MPRRREVPKREILPDPKYGNVELSKFMNVIMEGGKKAVAERIIYGALDFIEKKNPDKDPLEAFTVAINNVKPMVEVKSRRVGGANYQVPVEVRPVRRLALSMRWIKEAARKRGEKSMALRLANELMEATEGRGGAMKKRDEVHRMAEANRAFSHFRF</sequence>
<organism>
    <name type="scientific">Variovorax paradoxus (strain S110)</name>
    <dbReference type="NCBI Taxonomy" id="543728"/>
    <lineage>
        <taxon>Bacteria</taxon>
        <taxon>Pseudomonadati</taxon>
        <taxon>Pseudomonadota</taxon>
        <taxon>Betaproteobacteria</taxon>
        <taxon>Burkholderiales</taxon>
        <taxon>Comamonadaceae</taxon>
        <taxon>Variovorax</taxon>
    </lineage>
</organism>
<comment type="function">
    <text evidence="1">One of the primary rRNA binding proteins, it binds directly to 16S rRNA where it nucleates assembly of the head domain of the 30S subunit. Is located at the subunit interface close to the decoding center, probably blocks exit of the E-site tRNA.</text>
</comment>
<comment type="subunit">
    <text evidence="1">Part of the 30S ribosomal subunit. Contacts proteins S9 and S11.</text>
</comment>
<comment type="similarity">
    <text evidence="1">Belongs to the universal ribosomal protein uS7 family.</text>
</comment>
<proteinExistence type="inferred from homology"/>